<comment type="function">
    <text evidence="1">Binds directly to 23S rRNA. The L1 stalk is quite mobile in the ribosome, and is involved in E site tRNA release.</text>
</comment>
<comment type="function">
    <text evidence="1">Protein L1 is also a translational repressor protein, it controls the translation of the L11 operon by binding to its mRNA.</text>
</comment>
<comment type="subunit">
    <text evidence="1">Part of the 50S ribosomal subunit.</text>
</comment>
<comment type="similarity">
    <text evidence="1">Belongs to the universal ribosomal protein uL1 family.</text>
</comment>
<sequence length="236" mass="24878">MSKNSKAYREAAAKIDAGREYTPLQAAELVKETSSKNFDASVDVAIRLGVDPRKADQLVRGTVSLPNGTGKTVRVAVFAAGEKATEAEAAGADFVGTDELVERIQGGWTDFDVAIATPDQMAKIGRIARVLGPRGLMPNPKTGTVTNDVAKAIEEVKGGKISFRVDKASNLHAAIGKASFDAKALAENYGALIDELLRIKPSSSKGIYLKKITMSSTTGPGVAVDTHITKNYTAEA</sequence>
<protein>
    <recommendedName>
        <fullName evidence="1">Large ribosomal subunit protein uL1</fullName>
    </recommendedName>
    <alternativeName>
        <fullName evidence="2">50S ribosomal protein L1</fullName>
    </alternativeName>
</protein>
<gene>
    <name evidence="1" type="primary">rplA</name>
    <name type="ordered locus">CE0489</name>
</gene>
<evidence type="ECO:0000255" key="1">
    <source>
        <dbReference type="HAMAP-Rule" id="MF_01318"/>
    </source>
</evidence>
<evidence type="ECO:0000305" key="2"/>
<proteinExistence type="inferred from homology"/>
<dbReference type="EMBL" id="BA000035">
    <property type="protein sequence ID" value="BAC17299.1"/>
    <property type="molecule type" value="Genomic_DNA"/>
</dbReference>
<dbReference type="RefSeq" id="WP_006770275.1">
    <property type="nucleotide sequence ID" value="NC_004369.1"/>
</dbReference>
<dbReference type="SMR" id="Q8FSA5"/>
<dbReference type="STRING" id="196164.gene:10740891"/>
<dbReference type="KEGG" id="cef:CE0489"/>
<dbReference type="eggNOG" id="COG0081">
    <property type="taxonomic scope" value="Bacteria"/>
</dbReference>
<dbReference type="HOGENOM" id="CLU_062853_0_0_11"/>
<dbReference type="OrthoDB" id="9803740at2"/>
<dbReference type="Proteomes" id="UP000001409">
    <property type="component" value="Chromosome"/>
</dbReference>
<dbReference type="GO" id="GO:0015934">
    <property type="term" value="C:large ribosomal subunit"/>
    <property type="evidence" value="ECO:0007669"/>
    <property type="project" value="InterPro"/>
</dbReference>
<dbReference type="GO" id="GO:0019843">
    <property type="term" value="F:rRNA binding"/>
    <property type="evidence" value="ECO:0007669"/>
    <property type="project" value="UniProtKB-UniRule"/>
</dbReference>
<dbReference type="GO" id="GO:0003735">
    <property type="term" value="F:structural constituent of ribosome"/>
    <property type="evidence" value="ECO:0007669"/>
    <property type="project" value="InterPro"/>
</dbReference>
<dbReference type="GO" id="GO:0000049">
    <property type="term" value="F:tRNA binding"/>
    <property type="evidence" value="ECO:0007669"/>
    <property type="project" value="UniProtKB-KW"/>
</dbReference>
<dbReference type="GO" id="GO:0006417">
    <property type="term" value="P:regulation of translation"/>
    <property type="evidence" value="ECO:0007669"/>
    <property type="project" value="UniProtKB-KW"/>
</dbReference>
<dbReference type="GO" id="GO:0006412">
    <property type="term" value="P:translation"/>
    <property type="evidence" value="ECO:0007669"/>
    <property type="project" value="UniProtKB-UniRule"/>
</dbReference>
<dbReference type="CDD" id="cd00403">
    <property type="entry name" value="Ribosomal_L1"/>
    <property type="match status" value="1"/>
</dbReference>
<dbReference type="FunFam" id="3.40.50.790:FF:000001">
    <property type="entry name" value="50S ribosomal protein L1"/>
    <property type="match status" value="1"/>
</dbReference>
<dbReference type="Gene3D" id="3.30.190.20">
    <property type="match status" value="1"/>
</dbReference>
<dbReference type="Gene3D" id="3.40.50.790">
    <property type="match status" value="1"/>
</dbReference>
<dbReference type="HAMAP" id="MF_01318_B">
    <property type="entry name" value="Ribosomal_uL1_B"/>
    <property type="match status" value="1"/>
</dbReference>
<dbReference type="InterPro" id="IPR005878">
    <property type="entry name" value="Ribosom_uL1_bac-type"/>
</dbReference>
<dbReference type="InterPro" id="IPR002143">
    <property type="entry name" value="Ribosomal_uL1"/>
</dbReference>
<dbReference type="InterPro" id="IPR023674">
    <property type="entry name" value="Ribosomal_uL1-like"/>
</dbReference>
<dbReference type="InterPro" id="IPR028364">
    <property type="entry name" value="Ribosomal_uL1/biogenesis"/>
</dbReference>
<dbReference type="InterPro" id="IPR016095">
    <property type="entry name" value="Ribosomal_uL1_3-a/b-sand"/>
</dbReference>
<dbReference type="InterPro" id="IPR023673">
    <property type="entry name" value="Ribosomal_uL1_CS"/>
</dbReference>
<dbReference type="NCBIfam" id="TIGR01169">
    <property type="entry name" value="rplA_bact"/>
    <property type="match status" value="1"/>
</dbReference>
<dbReference type="PANTHER" id="PTHR36427">
    <property type="entry name" value="54S RIBOSOMAL PROTEIN L1, MITOCHONDRIAL"/>
    <property type="match status" value="1"/>
</dbReference>
<dbReference type="PANTHER" id="PTHR36427:SF3">
    <property type="entry name" value="LARGE RIBOSOMAL SUBUNIT PROTEIN UL1M"/>
    <property type="match status" value="1"/>
</dbReference>
<dbReference type="Pfam" id="PF00687">
    <property type="entry name" value="Ribosomal_L1"/>
    <property type="match status" value="1"/>
</dbReference>
<dbReference type="PIRSF" id="PIRSF002155">
    <property type="entry name" value="Ribosomal_L1"/>
    <property type="match status" value="1"/>
</dbReference>
<dbReference type="SUPFAM" id="SSF56808">
    <property type="entry name" value="Ribosomal protein L1"/>
    <property type="match status" value="1"/>
</dbReference>
<dbReference type="PROSITE" id="PS01199">
    <property type="entry name" value="RIBOSOMAL_L1"/>
    <property type="match status" value="1"/>
</dbReference>
<name>RL1_COREF</name>
<reference key="1">
    <citation type="journal article" date="2003" name="Genome Res.">
        <title>Comparative complete genome sequence analysis of the amino acid replacements responsible for the thermostability of Corynebacterium efficiens.</title>
        <authorList>
            <person name="Nishio Y."/>
            <person name="Nakamura Y."/>
            <person name="Kawarabayasi Y."/>
            <person name="Usuda Y."/>
            <person name="Kimura E."/>
            <person name="Sugimoto S."/>
            <person name="Matsui K."/>
            <person name="Yamagishi A."/>
            <person name="Kikuchi H."/>
            <person name="Ikeo K."/>
            <person name="Gojobori T."/>
        </authorList>
    </citation>
    <scope>NUCLEOTIDE SEQUENCE [LARGE SCALE GENOMIC DNA]</scope>
    <source>
        <strain>DSM 44549 / YS-314 / AJ 12310 / JCM 11189 / NBRC 100395</strain>
    </source>
</reference>
<accession>Q8FSA5</accession>
<organism>
    <name type="scientific">Corynebacterium efficiens (strain DSM 44549 / YS-314 / AJ 12310 / JCM 11189 / NBRC 100395)</name>
    <dbReference type="NCBI Taxonomy" id="196164"/>
    <lineage>
        <taxon>Bacteria</taxon>
        <taxon>Bacillati</taxon>
        <taxon>Actinomycetota</taxon>
        <taxon>Actinomycetes</taxon>
        <taxon>Mycobacteriales</taxon>
        <taxon>Corynebacteriaceae</taxon>
        <taxon>Corynebacterium</taxon>
    </lineage>
</organism>
<feature type="chain" id="PRO_0000125648" description="Large ribosomal subunit protein uL1">
    <location>
        <begin position="1"/>
        <end position="236"/>
    </location>
</feature>
<keyword id="KW-1185">Reference proteome</keyword>
<keyword id="KW-0678">Repressor</keyword>
<keyword id="KW-0687">Ribonucleoprotein</keyword>
<keyword id="KW-0689">Ribosomal protein</keyword>
<keyword id="KW-0694">RNA-binding</keyword>
<keyword id="KW-0699">rRNA-binding</keyword>
<keyword id="KW-0810">Translation regulation</keyword>
<keyword id="KW-0820">tRNA-binding</keyword>